<sequence>MAKTHEIKVERRADEGKGASRRLRHAGVIPAIVYGGELEPVSIQLNHEQIWLAQQNEWFYSSILDLNLNGDVQQVLLRDMQRHPFKQLIMHIDFQRVSANEKLSASVPLHFINEAISPAGKSSEVVVTHELNEVQVVCLPKDLPEFIEIDLSTLEVGAVIHLSEITLPAGVEIPELKLGKEHDVAVVIAKHGQVEADDVADEAAEGDAK</sequence>
<accession>Q8PC62</accession>
<keyword id="KW-1185">Reference proteome</keyword>
<keyword id="KW-0687">Ribonucleoprotein</keyword>
<keyword id="KW-0689">Ribosomal protein</keyword>
<keyword id="KW-0694">RNA-binding</keyword>
<keyword id="KW-0699">rRNA-binding</keyword>
<evidence type="ECO:0000255" key="1">
    <source>
        <dbReference type="HAMAP-Rule" id="MF_01334"/>
    </source>
</evidence>
<evidence type="ECO:0000305" key="2"/>
<organism>
    <name type="scientific">Xanthomonas campestris pv. campestris (strain ATCC 33913 / DSM 3586 / NCPPB 528 / LMG 568 / P 25)</name>
    <dbReference type="NCBI Taxonomy" id="190485"/>
    <lineage>
        <taxon>Bacteria</taxon>
        <taxon>Pseudomonadati</taxon>
        <taxon>Pseudomonadota</taxon>
        <taxon>Gammaproteobacteria</taxon>
        <taxon>Lysobacterales</taxon>
        <taxon>Lysobacteraceae</taxon>
        <taxon>Xanthomonas</taxon>
    </lineage>
</organism>
<gene>
    <name evidence="1" type="primary">rplY</name>
    <name evidence="1" type="synonym">ctc</name>
    <name type="ordered locus">XCC0874</name>
</gene>
<protein>
    <recommendedName>
        <fullName evidence="1">Large ribosomal subunit protein bL25</fullName>
    </recommendedName>
    <alternativeName>
        <fullName evidence="2">50S ribosomal protein L25</fullName>
    </alternativeName>
    <alternativeName>
        <fullName evidence="1">General stress protein CTC</fullName>
    </alternativeName>
</protein>
<name>RL25_XANCP</name>
<comment type="function">
    <text evidence="1">This is one of the proteins that binds to the 5S RNA in the ribosome where it forms part of the central protuberance.</text>
</comment>
<comment type="subunit">
    <text evidence="1">Part of the 50S ribosomal subunit; part of the 5S rRNA/L5/L18/L25 subcomplex. Contacts the 5S rRNA. Binds to the 5S rRNA independently of L5 and L18.</text>
</comment>
<comment type="similarity">
    <text evidence="1">Belongs to the bacterial ribosomal protein bL25 family. CTC subfamily.</text>
</comment>
<feature type="chain" id="PRO_0000181619" description="Large ribosomal subunit protein bL25">
    <location>
        <begin position="1"/>
        <end position="209"/>
    </location>
</feature>
<dbReference type="EMBL" id="AE008922">
    <property type="protein sequence ID" value="AAM40188.1"/>
    <property type="molecule type" value="Genomic_DNA"/>
</dbReference>
<dbReference type="RefSeq" id="NP_636264.1">
    <property type="nucleotide sequence ID" value="NC_003902.1"/>
</dbReference>
<dbReference type="RefSeq" id="WP_011036109.1">
    <property type="nucleotide sequence ID" value="NC_003902.1"/>
</dbReference>
<dbReference type="SMR" id="Q8PC62"/>
<dbReference type="STRING" id="190485.XCC0874"/>
<dbReference type="EnsemblBacteria" id="AAM40188">
    <property type="protein sequence ID" value="AAM40188"/>
    <property type="gene ID" value="XCC0874"/>
</dbReference>
<dbReference type="KEGG" id="xcc:XCC0874"/>
<dbReference type="PATRIC" id="fig|190485.4.peg.949"/>
<dbReference type="eggNOG" id="COG1825">
    <property type="taxonomic scope" value="Bacteria"/>
</dbReference>
<dbReference type="HOGENOM" id="CLU_075939_0_1_6"/>
<dbReference type="OrthoDB" id="9806411at2"/>
<dbReference type="Proteomes" id="UP000001010">
    <property type="component" value="Chromosome"/>
</dbReference>
<dbReference type="GO" id="GO:0022625">
    <property type="term" value="C:cytosolic large ribosomal subunit"/>
    <property type="evidence" value="ECO:0000318"/>
    <property type="project" value="GO_Central"/>
</dbReference>
<dbReference type="GO" id="GO:0008097">
    <property type="term" value="F:5S rRNA binding"/>
    <property type="evidence" value="ECO:0000318"/>
    <property type="project" value="GO_Central"/>
</dbReference>
<dbReference type="GO" id="GO:0003735">
    <property type="term" value="F:structural constituent of ribosome"/>
    <property type="evidence" value="ECO:0007669"/>
    <property type="project" value="InterPro"/>
</dbReference>
<dbReference type="GO" id="GO:0006412">
    <property type="term" value="P:translation"/>
    <property type="evidence" value="ECO:0000318"/>
    <property type="project" value="GO_Central"/>
</dbReference>
<dbReference type="CDD" id="cd00495">
    <property type="entry name" value="Ribosomal_L25_TL5_CTC"/>
    <property type="match status" value="1"/>
</dbReference>
<dbReference type="FunFam" id="2.40.240.10:FF:000002">
    <property type="entry name" value="50S ribosomal protein L25"/>
    <property type="match status" value="1"/>
</dbReference>
<dbReference type="Gene3D" id="2.170.120.20">
    <property type="entry name" value="Ribosomal protein L25, beta domain"/>
    <property type="match status" value="1"/>
</dbReference>
<dbReference type="Gene3D" id="2.40.240.10">
    <property type="entry name" value="Ribosomal Protein L25, Chain P"/>
    <property type="match status" value="1"/>
</dbReference>
<dbReference type="HAMAP" id="MF_01336">
    <property type="entry name" value="Ribosomal_bL25"/>
    <property type="match status" value="1"/>
</dbReference>
<dbReference type="HAMAP" id="MF_01334">
    <property type="entry name" value="Ribosomal_bL25_CTC"/>
    <property type="match status" value="1"/>
</dbReference>
<dbReference type="InterPro" id="IPR020056">
    <property type="entry name" value="Rbsml_bL25/Gln-tRNA_synth_N"/>
</dbReference>
<dbReference type="InterPro" id="IPR011035">
    <property type="entry name" value="Ribosomal_bL25/Gln-tRNA_synth"/>
</dbReference>
<dbReference type="InterPro" id="IPR020057">
    <property type="entry name" value="Ribosomal_bL25_b-dom"/>
</dbReference>
<dbReference type="InterPro" id="IPR037121">
    <property type="entry name" value="Ribosomal_bL25_C"/>
</dbReference>
<dbReference type="InterPro" id="IPR001021">
    <property type="entry name" value="Ribosomal_bL25_long"/>
</dbReference>
<dbReference type="InterPro" id="IPR020055">
    <property type="entry name" value="Ribosomal_bL25_short"/>
</dbReference>
<dbReference type="InterPro" id="IPR029751">
    <property type="entry name" value="Ribosomal_L25_dom"/>
</dbReference>
<dbReference type="InterPro" id="IPR020930">
    <property type="entry name" value="Ribosomal_uL5_bac-type"/>
</dbReference>
<dbReference type="NCBIfam" id="TIGR00731">
    <property type="entry name" value="bL25_bact_ctc"/>
    <property type="match status" value="1"/>
</dbReference>
<dbReference type="NCBIfam" id="NF004128">
    <property type="entry name" value="PRK05618.1-2"/>
    <property type="match status" value="1"/>
</dbReference>
<dbReference type="NCBIfam" id="NF004130">
    <property type="entry name" value="PRK05618.1-5"/>
    <property type="match status" value="1"/>
</dbReference>
<dbReference type="NCBIfam" id="NF004612">
    <property type="entry name" value="PRK05943.1"/>
    <property type="match status" value="1"/>
</dbReference>
<dbReference type="PANTHER" id="PTHR33284">
    <property type="entry name" value="RIBOSOMAL PROTEIN L25/GLN-TRNA SYNTHETASE, ANTI-CODON-BINDING DOMAIN-CONTAINING PROTEIN"/>
    <property type="match status" value="1"/>
</dbReference>
<dbReference type="PANTHER" id="PTHR33284:SF1">
    <property type="entry name" value="RIBOSOMAL PROTEIN L25_GLN-TRNA SYNTHETASE, ANTI-CODON-BINDING DOMAIN-CONTAINING PROTEIN"/>
    <property type="match status" value="1"/>
</dbReference>
<dbReference type="Pfam" id="PF01386">
    <property type="entry name" value="Ribosomal_L25p"/>
    <property type="match status" value="1"/>
</dbReference>
<dbReference type="Pfam" id="PF14693">
    <property type="entry name" value="Ribosomal_TL5_C"/>
    <property type="match status" value="1"/>
</dbReference>
<dbReference type="SUPFAM" id="SSF50715">
    <property type="entry name" value="Ribosomal protein L25-like"/>
    <property type="match status" value="1"/>
</dbReference>
<proteinExistence type="inferred from homology"/>
<reference key="1">
    <citation type="journal article" date="2002" name="Nature">
        <title>Comparison of the genomes of two Xanthomonas pathogens with differing host specificities.</title>
        <authorList>
            <person name="da Silva A.C.R."/>
            <person name="Ferro J.A."/>
            <person name="Reinach F.C."/>
            <person name="Farah C.S."/>
            <person name="Furlan L.R."/>
            <person name="Quaggio R.B."/>
            <person name="Monteiro-Vitorello C.B."/>
            <person name="Van Sluys M.A."/>
            <person name="Almeida N.F. Jr."/>
            <person name="Alves L.M.C."/>
            <person name="do Amaral A.M."/>
            <person name="Bertolini M.C."/>
            <person name="Camargo L.E.A."/>
            <person name="Camarotte G."/>
            <person name="Cannavan F."/>
            <person name="Cardozo J."/>
            <person name="Chambergo F."/>
            <person name="Ciapina L.P."/>
            <person name="Cicarelli R.M.B."/>
            <person name="Coutinho L.L."/>
            <person name="Cursino-Santos J.R."/>
            <person name="El-Dorry H."/>
            <person name="Faria J.B."/>
            <person name="Ferreira A.J.S."/>
            <person name="Ferreira R.C.C."/>
            <person name="Ferro M.I.T."/>
            <person name="Formighieri E.F."/>
            <person name="Franco M.C."/>
            <person name="Greggio C.C."/>
            <person name="Gruber A."/>
            <person name="Katsuyama A.M."/>
            <person name="Kishi L.T."/>
            <person name="Leite R.P."/>
            <person name="Lemos E.G.M."/>
            <person name="Lemos M.V.F."/>
            <person name="Locali E.C."/>
            <person name="Machado M.A."/>
            <person name="Madeira A.M.B.N."/>
            <person name="Martinez-Rossi N.M."/>
            <person name="Martins E.C."/>
            <person name="Meidanis J."/>
            <person name="Menck C.F.M."/>
            <person name="Miyaki C.Y."/>
            <person name="Moon D.H."/>
            <person name="Moreira L.M."/>
            <person name="Novo M.T.M."/>
            <person name="Okura V.K."/>
            <person name="Oliveira M.C."/>
            <person name="Oliveira V.R."/>
            <person name="Pereira H.A."/>
            <person name="Rossi A."/>
            <person name="Sena J.A.D."/>
            <person name="Silva C."/>
            <person name="de Souza R.F."/>
            <person name="Spinola L.A.F."/>
            <person name="Takita M.A."/>
            <person name="Tamura R.E."/>
            <person name="Teixeira E.C."/>
            <person name="Tezza R.I.D."/>
            <person name="Trindade dos Santos M."/>
            <person name="Truffi D."/>
            <person name="Tsai S.M."/>
            <person name="White F.F."/>
            <person name="Setubal J.C."/>
            <person name="Kitajima J.P."/>
        </authorList>
    </citation>
    <scope>NUCLEOTIDE SEQUENCE [LARGE SCALE GENOMIC DNA]</scope>
    <source>
        <strain>ATCC 33913 / DSM 3586 / NCPPB 528 / LMG 568 / P 25</strain>
    </source>
</reference>